<protein>
    <recommendedName>
        <fullName evidence="1">Ubiquinone biosynthesis O-methyltransferase</fullName>
    </recommendedName>
    <alternativeName>
        <fullName evidence="1">2-polyprenyl-6-hydroxyphenol methylase</fullName>
        <ecNumber evidence="1">2.1.1.222</ecNumber>
    </alternativeName>
    <alternativeName>
        <fullName evidence="1">3-demethylubiquinone 3-O-methyltransferase</fullName>
        <ecNumber evidence="1">2.1.1.64</ecNumber>
    </alternativeName>
</protein>
<comment type="function">
    <text evidence="1">O-methyltransferase that catalyzes the 2 O-methylation steps in the ubiquinone biosynthetic pathway.</text>
</comment>
<comment type="catalytic activity">
    <reaction evidence="1">
        <text>a 3-demethylubiquinol + S-adenosyl-L-methionine = a ubiquinol + S-adenosyl-L-homocysteine + H(+)</text>
        <dbReference type="Rhea" id="RHEA:44380"/>
        <dbReference type="Rhea" id="RHEA-COMP:9566"/>
        <dbReference type="Rhea" id="RHEA-COMP:10914"/>
        <dbReference type="ChEBI" id="CHEBI:15378"/>
        <dbReference type="ChEBI" id="CHEBI:17976"/>
        <dbReference type="ChEBI" id="CHEBI:57856"/>
        <dbReference type="ChEBI" id="CHEBI:59789"/>
        <dbReference type="ChEBI" id="CHEBI:84422"/>
        <dbReference type="EC" id="2.1.1.64"/>
    </reaction>
</comment>
<comment type="catalytic activity">
    <reaction evidence="1">
        <text>a 3-(all-trans-polyprenyl)benzene-1,2-diol + S-adenosyl-L-methionine = a 2-methoxy-6-(all-trans-polyprenyl)phenol + S-adenosyl-L-homocysteine + H(+)</text>
        <dbReference type="Rhea" id="RHEA:31411"/>
        <dbReference type="Rhea" id="RHEA-COMP:9550"/>
        <dbReference type="Rhea" id="RHEA-COMP:9551"/>
        <dbReference type="ChEBI" id="CHEBI:15378"/>
        <dbReference type="ChEBI" id="CHEBI:57856"/>
        <dbReference type="ChEBI" id="CHEBI:59789"/>
        <dbReference type="ChEBI" id="CHEBI:62729"/>
        <dbReference type="ChEBI" id="CHEBI:62731"/>
        <dbReference type="EC" id="2.1.1.222"/>
    </reaction>
</comment>
<comment type="pathway">
    <text evidence="1">Cofactor biosynthesis; ubiquinone biosynthesis.</text>
</comment>
<comment type="similarity">
    <text evidence="1">Belongs to the methyltransferase superfamily. UbiG/COQ3 family.</text>
</comment>
<dbReference type="EC" id="2.1.1.222" evidence="1"/>
<dbReference type="EC" id="2.1.1.64" evidence="1"/>
<dbReference type="EMBL" id="CP000109">
    <property type="protein sequence ID" value="ABB41785.1"/>
    <property type="molecule type" value="Genomic_DNA"/>
</dbReference>
<dbReference type="SMR" id="Q31GD8"/>
<dbReference type="STRING" id="317025.Tcr_1190"/>
<dbReference type="KEGG" id="tcx:Tcr_1190"/>
<dbReference type="eggNOG" id="COG2227">
    <property type="taxonomic scope" value="Bacteria"/>
</dbReference>
<dbReference type="HOGENOM" id="CLU_042432_5_0_6"/>
<dbReference type="OrthoDB" id="9801538at2"/>
<dbReference type="UniPathway" id="UPA00232"/>
<dbReference type="GO" id="GO:0102208">
    <property type="term" value="F:2-polyprenyl-6-hydroxyphenol methylase activity"/>
    <property type="evidence" value="ECO:0007669"/>
    <property type="project" value="UniProtKB-EC"/>
</dbReference>
<dbReference type="GO" id="GO:0061542">
    <property type="term" value="F:3-demethylubiquinol 3-O-methyltransferase activity"/>
    <property type="evidence" value="ECO:0007669"/>
    <property type="project" value="UniProtKB-UniRule"/>
</dbReference>
<dbReference type="GO" id="GO:0010420">
    <property type="term" value="F:polyprenyldihydroxybenzoate methyltransferase activity"/>
    <property type="evidence" value="ECO:0007669"/>
    <property type="project" value="InterPro"/>
</dbReference>
<dbReference type="GO" id="GO:0032259">
    <property type="term" value="P:methylation"/>
    <property type="evidence" value="ECO:0007669"/>
    <property type="project" value="UniProtKB-KW"/>
</dbReference>
<dbReference type="CDD" id="cd02440">
    <property type="entry name" value="AdoMet_MTases"/>
    <property type="match status" value="1"/>
</dbReference>
<dbReference type="Gene3D" id="3.40.50.150">
    <property type="entry name" value="Vaccinia Virus protein VP39"/>
    <property type="match status" value="1"/>
</dbReference>
<dbReference type="HAMAP" id="MF_00472">
    <property type="entry name" value="UbiG"/>
    <property type="match status" value="1"/>
</dbReference>
<dbReference type="InterPro" id="IPR029063">
    <property type="entry name" value="SAM-dependent_MTases_sf"/>
</dbReference>
<dbReference type="InterPro" id="IPR010233">
    <property type="entry name" value="UbiG_MeTrfase"/>
</dbReference>
<dbReference type="NCBIfam" id="TIGR01983">
    <property type="entry name" value="UbiG"/>
    <property type="match status" value="1"/>
</dbReference>
<dbReference type="PANTHER" id="PTHR43464">
    <property type="entry name" value="METHYLTRANSFERASE"/>
    <property type="match status" value="1"/>
</dbReference>
<dbReference type="PANTHER" id="PTHR43464:SF19">
    <property type="entry name" value="UBIQUINONE BIOSYNTHESIS O-METHYLTRANSFERASE, MITOCHONDRIAL"/>
    <property type="match status" value="1"/>
</dbReference>
<dbReference type="Pfam" id="PF13489">
    <property type="entry name" value="Methyltransf_23"/>
    <property type="match status" value="1"/>
</dbReference>
<dbReference type="SUPFAM" id="SSF53335">
    <property type="entry name" value="S-adenosyl-L-methionine-dependent methyltransferases"/>
    <property type="match status" value="1"/>
</dbReference>
<evidence type="ECO:0000255" key="1">
    <source>
        <dbReference type="HAMAP-Rule" id="MF_00472"/>
    </source>
</evidence>
<feature type="chain" id="PRO_0000241742" description="Ubiquinone biosynthesis O-methyltransferase">
    <location>
        <begin position="1"/>
        <end position="241"/>
    </location>
</feature>
<feature type="binding site" evidence="1">
    <location>
        <position position="44"/>
    </location>
    <ligand>
        <name>S-adenosyl-L-methionine</name>
        <dbReference type="ChEBI" id="CHEBI:59789"/>
    </ligand>
</feature>
<feature type="binding site" evidence="1">
    <location>
        <position position="63"/>
    </location>
    <ligand>
        <name>S-adenosyl-L-methionine</name>
        <dbReference type="ChEBI" id="CHEBI:59789"/>
    </ligand>
</feature>
<feature type="binding site" evidence="1">
    <location>
        <position position="84"/>
    </location>
    <ligand>
        <name>S-adenosyl-L-methionine</name>
        <dbReference type="ChEBI" id="CHEBI:59789"/>
    </ligand>
</feature>
<feature type="binding site" evidence="1">
    <location>
        <position position="128"/>
    </location>
    <ligand>
        <name>S-adenosyl-L-methionine</name>
        <dbReference type="ChEBI" id="CHEBI:59789"/>
    </ligand>
</feature>
<organism>
    <name type="scientific">Hydrogenovibrio crunogenus (strain DSM 25203 / XCL-2)</name>
    <name type="common">Thiomicrospira crunogena</name>
    <dbReference type="NCBI Taxonomy" id="317025"/>
    <lineage>
        <taxon>Bacteria</taxon>
        <taxon>Pseudomonadati</taxon>
        <taxon>Pseudomonadota</taxon>
        <taxon>Gammaproteobacteria</taxon>
        <taxon>Thiotrichales</taxon>
        <taxon>Piscirickettsiaceae</taxon>
        <taxon>Hydrogenovibrio</taxon>
    </lineage>
</organism>
<reference key="1">
    <citation type="journal article" date="2006" name="PLoS Biol.">
        <title>The genome of deep-sea vent chemolithoautotroph Thiomicrospira crunogena XCL-2.</title>
        <authorList>
            <person name="Scott K.M."/>
            <person name="Sievert S.M."/>
            <person name="Abril F.N."/>
            <person name="Ball L.A."/>
            <person name="Barrett C.J."/>
            <person name="Blake R.A."/>
            <person name="Boller A.J."/>
            <person name="Chain P.S.G."/>
            <person name="Clark J.A."/>
            <person name="Davis C.R."/>
            <person name="Detter C."/>
            <person name="Do K.F."/>
            <person name="Dobrinski K.P."/>
            <person name="Faza B.I."/>
            <person name="Fitzpatrick K.A."/>
            <person name="Freyermuth S.K."/>
            <person name="Harmer T.L."/>
            <person name="Hauser L.J."/>
            <person name="Huegler M."/>
            <person name="Kerfeld C.A."/>
            <person name="Klotz M.G."/>
            <person name="Kong W.W."/>
            <person name="Land M."/>
            <person name="Lapidus A."/>
            <person name="Larimer F.W."/>
            <person name="Longo D.L."/>
            <person name="Lucas S."/>
            <person name="Malfatti S.A."/>
            <person name="Massey S.E."/>
            <person name="Martin D.D."/>
            <person name="McCuddin Z."/>
            <person name="Meyer F."/>
            <person name="Moore J.L."/>
            <person name="Ocampo L.H. Jr."/>
            <person name="Paul J.H."/>
            <person name="Paulsen I.T."/>
            <person name="Reep D.K."/>
            <person name="Ren Q."/>
            <person name="Ross R.L."/>
            <person name="Sato P.Y."/>
            <person name="Thomas P."/>
            <person name="Tinkham L.E."/>
            <person name="Zeruth G.T."/>
        </authorList>
    </citation>
    <scope>NUCLEOTIDE SEQUENCE [LARGE SCALE GENOMIC DNA]</scope>
    <source>
        <strain>DSM 25203 / XCL-2</strain>
    </source>
</reference>
<accession>Q31GD8</accession>
<keyword id="KW-0489">Methyltransferase</keyword>
<keyword id="KW-0949">S-adenosyl-L-methionine</keyword>
<keyword id="KW-0808">Transferase</keyword>
<keyword id="KW-0831">Ubiquinone biosynthesis</keyword>
<proteinExistence type="inferred from homology"/>
<name>UBIG_HYDCU</name>
<gene>
    <name evidence="1" type="primary">ubiG</name>
    <name type="ordered locus">Tcr_1190</name>
</gene>
<sequence length="241" mass="26834">MSQADLNKHKNADPSELNNFNQLANTWWDESGEFGALHKINPLRIEFIKQFQSIENKTILDVGCGGGILSESLAKAGGNVTGIDLAEDVLTIARLHSLDTETKVNYHLISAEDHAQTHEEEYDIVTCMEMLEHVPDPASIIHAAAKAVKPGGWVFFSTLNRNYKSYLLAIFAAEQVLNLVPKGTHTHDKFIQPSELDAMARQAGLFLKEGAGIDFNPLLKRYRLTDRLDVNYLLAYQKSAV</sequence>